<accession>Q2W2Q6</accession>
<evidence type="ECO:0000255" key="1">
    <source>
        <dbReference type="HAMAP-Rule" id="MF_00685"/>
    </source>
</evidence>
<proteinExistence type="inferred from homology"/>
<dbReference type="EC" id="2.4.1.18" evidence="1"/>
<dbReference type="EMBL" id="AP007255">
    <property type="protein sequence ID" value="BAE51869.1"/>
    <property type="molecule type" value="Genomic_DNA"/>
</dbReference>
<dbReference type="SMR" id="Q2W2Q6"/>
<dbReference type="STRING" id="342108.amb3065"/>
<dbReference type="CAZy" id="CBM48">
    <property type="family name" value="Carbohydrate-Binding Module Family 48"/>
</dbReference>
<dbReference type="CAZy" id="GH13">
    <property type="family name" value="Glycoside Hydrolase Family 13"/>
</dbReference>
<dbReference type="KEGG" id="mag:amb3065"/>
<dbReference type="HOGENOM" id="CLU_004245_3_2_5"/>
<dbReference type="UniPathway" id="UPA00164"/>
<dbReference type="Proteomes" id="UP000007058">
    <property type="component" value="Chromosome"/>
</dbReference>
<dbReference type="GO" id="GO:0005829">
    <property type="term" value="C:cytosol"/>
    <property type="evidence" value="ECO:0007669"/>
    <property type="project" value="TreeGrafter"/>
</dbReference>
<dbReference type="GO" id="GO:0003844">
    <property type="term" value="F:1,4-alpha-glucan branching enzyme activity"/>
    <property type="evidence" value="ECO:0007669"/>
    <property type="project" value="UniProtKB-UniRule"/>
</dbReference>
<dbReference type="GO" id="GO:0043169">
    <property type="term" value="F:cation binding"/>
    <property type="evidence" value="ECO:0007669"/>
    <property type="project" value="InterPro"/>
</dbReference>
<dbReference type="GO" id="GO:0004553">
    <property type="term" value="F:hydrolase activity, hydrolyzing O-glycosyl compounds"/>
    <property type="evidence" value="ECO:0007669"/>
    <property type="project" value="InterPro"/>
</dbReference>
<dbReference type="GO" id="GO:0005978">
    <property type="term" value="P:glycogen biosynthetic process"/>
    <property type="evidence" value="ECO:0007669"/>
    <property type="project" value="UniProtKB-UniRule"/>
</dbReference>
<dbReference type="CDD" id="cd11322">
    <property type="entry name" value="AmyAc_Glg_BE"/>
    <property type="match status" value="1"/>
</dbReference>
<dbReference type="CDD" id="cd02855">
    <property type="entry name" value="E_set_GBE_prok_N"/>
    <property type="match status" value="1"/>
</dbReference>
<dbReference type="FunFam" id="2.60.40.10:FF:000169">
    <property type="entry name" value="1,4-alpha-glucan branching enzyme GlgB"/>
    <property type="match status" value="1"/>
</dbReference>
<dbReference type="FunFam" id="2.60.40.1180:FF:000002">
    <property type="entry name" value="1,4-alpha-glucan branching enzyme GlgB"/>
    <property type="match status" value="1"/>
</dbReference>
<dbReference type="FunFam" id="3.20.20.80:FF:000003">
    <property type="entry name" value="1,4-alpha-glucan branching enzyme GlgB"/>
    <property type="match status" value="1"/>
</dbReference>
<dbReference type="Gene3D" id="3.20.20.80">
    <property type="entry name" value="Glycosidases"/>
    <property type="match status" value="1"/>
</dbReference>
<dbReference type="Gene3D" id="2.60.40.1180">
    <property type="entry name" value="Golgi alpha-mannosidase II"/>
    <property type="match status" value="1"/>
</dbReference>
<dbReference type="Gene3D" id="2.60.40.10">
    <property type="entry name" value="Immunoglobulins"/>
    <property type="match status" value="2"/>
</dbReference>
<dbReference type="HAMAP" id="MF_00685">
    <property type="entry name" value="GlgB"/>
    <property type="match status" value="1"/>
</dbReference>
<dbReference type="InterPro" id="IPR006048">
    <property type="entry name" value="A-amylase/branching_C"/>
</dbReference>
<dbReference type="InterPro" id="IPR037439">
    <property type="entry name" value="Branching_enzy"/>
</dbReference>
<dbReference type="InterPro" id="IPR006407">
    <property type="entry name" value="GlgB"/>
</dbReference>
<dbReference type="InterPro" id="IPR054169">
    <property type="entry name" value="GlgB_N"/>
</dbReference>
<dbReference type="InterPro" id="IPR044143">
    <property type="entry name" value="GlgB_N_E_set_prok"/>
</dbReference>
<dbReference type="InterPro" id="IPR006047">
    <property type="entry name" value="Glyco_hydro_13_cat_dom"/>
</dbReference>
<dbReference type="InterPro" id="IPR004193">
    <property type="entry name" value="Glyco_hydro_13_N"/>
</dbReference>
<dbReference type="InterPro" id="IPR013780">
    <property type="entry name" value="Glyco_hydro_b"/>
</dbReference>
<dbReference type="InterPro" id="IPR017853">
    <property type="entry name" value="Glycoside_hydrolase_SF"/>
</dbReference>
<dbReference type="InterPro" id="IPR013783">
    <property type="entry name" value="Ig-like_fold"/>
</dbReference>
<dbReference type="InterPro" id="IPR014756">
    <property type="entry name" value="Ig_E-set"/>
</dbReference>
<dbReference type="NCBIfam" id="TIGR01515">
    <property type="entry name" value="branching_enzym"/>
    <property type="match status" value="1"/>
</dbReference>
<dbReference type="NCBIfam" id="NF003811">
    <property type="entry name" value="PRK05402.1"/>
    <property type="match status" value="1"/>
</dbReference>
<dbReference type="NCBIfam" id="NF008967">
    <property type="entry name" value="PRK12313.1"/>
    <property type="match status" value="1"/>
</dbReference>
<dbReference type="PANTHER" id="PTHR43651">
    <property type="entry name" value="1,4-ALPHA-GLUCAN-BRANCHING ENZYME"/>
    <property type="match status" value="1"/>
</dbReference>
<dbReference type="PANTHER" id="PTHR43651:SF3">
    <property type="entry name" value="1,4-ALPHA-GLUCAN-BRANCHING ENZYME"/>
    <property type="match status" value="1"/>
</dbReference>
<dbReference type="Pfam" id="PF00128">
    <property type="entry name" value="Alpha-amylase"/>
    <property type="match status" value="2"/>
</dbReference>
<dbReference type="Pfam" id="PF02806">
    <property type="entry name" value="Alpha-amylase_C"/>
    <property type="match status" value="1"/>
</dbReference>
<dbReference type="Pfam" id="PF02922">
    <property type="entry name" value="CBM_48"/>
    <property type="match status" value="1"/>
</dbReference>
<dbReference type="Pfam" id="PF22019">
    <property type="entry name" value="GlgB_N"/>
    <property type="match status" value="1"/>
</dbReference>
<dbReference type="PIRSF" id="PIRSF000463">
    <property type="entry name" value="GlgB"/>
    <property type="match status" value="1"/>
</dbReference>
<dbReference type="SMART" id="SM00642">
    <property type="entry name" value="Aamy"/>
    <property type="match status" value="1"/>
</dbReference>
<dbReference type="SUPFAM" id="SSF51445">
    <property type="entry name" value="(Trans)glycosidases"/>
    <property type="match status" value="1"/>
</dbReference>
<dbReference type="SUPFAM" id="SSF81296">
    <property type="entry name" value="E set domains"/>
    <property type="match status" value="2"/>
</dbReference>
<dbReference type="SUPFAM" id="SSF51011">
    <property type="entry name" value="Glycosyl hydrolase domain"/>
    <property type="match status" value="1"/>
</dbReference>
<feature type="chain" id="PRO_0000260664" description="1,4-alpha-glucan branching enzyme GlgB">
    <location>
        <begin position="1"/>
        <end position="740"/>
    </location>
</feature>
<feature type="active site" description="Nucleophile" evidence="1">
    <location>
        <position position="419"/>
    </location>
</feature>
<feature type="active site" description="Proton donor" evidence="1">
    <location>
        <position position="472"/>
    </location>
</feature>
<name>GLGB_PARM1</name>
<organism>
    <name type="scientific">Paramagnetospirillum magneticum (strain ATCC 700264 / AMB-1)</name>
    <name type="common">Magnetospirillum magneticum</name>
    <dbReference type="NCBI Taxonomy" id="342108"/>
    <lineage>
        <taxon>Bacteria</taxon>
        <taxon>Pseudomonadati</taxon>
        <taxon>Pseudomonadota</taxon>
        <taxon>Alphaproteobacteria</taxon>
        <taxon>Rhodospirillales</taxon>
        <taxon>Magnetospirillaceae</taxon>
        <taxon>Paramagnetospirillum</taxon>
    </lineage>
</organism>
<gene>
    <name evidence="1" type="primary">glgB</name>
    <name type="ordered locus">amb3065</name>
</gene>
<sequence length="740" mass="84012">MGSSTGRRGLMPEAAKLIRSSDADAIARGRHGDPFAVLGPHAVKGGTVIRTFQPQARTVFVLAADGETEMSRAHPDGLFAVKLKGSPAYRLRAVRHDGGTEELDDPYRFPPVLGDLDVHLLAEGTHLRTFEKLGAQVRIVDGVAGVDFALWAPNASRVSVVGDFNGWDGRRHPMRLRHEAGMWEIFIPGLGQGAVYKYEIVASDGRLLPLKADPYGHFAEVPPKTASVVWELGRRDWADADWMAAQKARNDRHAPISIYEVHLGSWRRVPEDCNRPLSYLEMADQLGDYVADLGFTHVEFLPIHEHPFGGSWGYQPVGLFAPTSRYGTPDEFRTLVDRLHQKGIGVIIDWVAGHFPNDPHGLHHFDGTHLYEHEDPRLGVHKDWNTLIYNYGRSEVVNYLYANALYWLEQYHVDGLRVDAVASMLYLDYSREPGEWIPNRHGGNENLEAIDFLRRMNMLVYAEHPGAMTIAEESTAWPMVSRPVHLGGLGFGYKWNMGWMHDTLRYFSKDPIHRRYHHDSLTFAQLYAYHENFVLPLSHDEVVHGKGSIFGRMPGDPWQRFANLRAYYGFMWTQPGKKLLFMGQEFAQQSEWNEDASLDWHLLGDGRNEGVMRLIRDLNRLYRTEPALHQLDNEPAGFAWIDCNDRDNSVLTWLRKGFDPGDFLVVAGNYTPMVRDSYRIGVPEPGWYRELLNTDSEWYGGANIHNGGGVHTEEVPWHGHGFSICLRLPPLATCVFKRER</sequence>
<protein>
    <recommendedName>
        <fullName evidence="1">1,4-alpha-glucan branching enzyme GlgB</fullName>
        <ecNumber evidence="1">2.4.1.18</ecNumber>
    </recommendedName>
    <alternativeName>
        <fullName evidence="1">1,4-alpha-D-glucan:1,4-alpha-D-glucan 6-glucosyl-transferase</fullName>
    </alternativeName>
    <alternativeName>
        <fullName evidence="1">Alpha-(1-&gt;4)-glucan branching enzyme</fullName>
    </alternativeName>
    <alternativeName>
        <fullName evidence="1">Glycogen branching enzyme</fullName>
        <shortName evidence="1">BE</shortName>
    </alternativeName>
</protein>
<comment type="function">
    <text evidence="1">Catalyzes the formation of the alpha-1,6-glucosidic linkages in glycogen by scission of a 1,4-alpha-linked oligosaccharide from growing alpha-1,4-glucan chains and the subsequent attachment of the oligosaccharide to the alpha-1,6 position.</text>
</comment>
<comment type="catalytic activity">
    <reaction evidence="1">
        <text>Transfers a segment of a (1-&gt;4)-alpha-D-glucan chain to a primary hydroxy group in a similar glucan chain.</text>
        <dbReference type="EC" id="2.4.1.18"/>
    </reaction>
</comment>
<comment type="pathway">
    <text evidence="1">Glycan biosynthesis; glycogen biosynthesis.</text>
</comment>
<comment type="subunit">
    <text evidence="1">Monomer.</text>
</comment>
<comment type="similarity">
    <text evidence="1">Belongs to the glycosyl hydrolase 13 family. GlgB subfamily.</text>
</comment>
<reference key="1">
    <citation type="journal article" date="2005" name="DNA Res.">
        <title>Complete genome sequence of the facultative anaerobic magnetotactic bacterium Magnetospirillum sp. strain AMB-1.</title>
        <authorList>
            <person name="Matsunaga T."/>
            <person name="Okamura Y."/>
            <person name="Fukuda Y."/>
            <person name="Wahyudi A.T."/>
            <person name="Murase Y."/>
            <person name="Takeyama H."/>
        </authorList>
    </citation>
    <scope>NUCLEOTIDE SEQUENCE [LARGE SCALE GENOMIC DNA]</scope>
    <source>
        <strain>ATCC 700264 / AMB-1</strain>
    </source>
</reference>
<keyword id="KW-0119">Carbohydrate metabolism</keyword>
<keyword id="KW-0320">Glycogen biosynthesis</keyword>
<keyword id="KW-0321">Glycogen metabolism</keyword>
<keyword id="KW-0328">Glycosyltransferase</keyword>
<keyword id="KW-0808">Transferase</keyword>